<evidence type="ECO:0000255" key="1">
    <source>
        <dbReference type="HAMAP-Rule" id="MF_00819"/>
    </source>
</evidence>
<sequence>MEITDVRLRRVETDGRMKAISSITIDGEFVIHDIRVIDGNEGLFVAMPSKRTPDGEFRDIAHPINSGTRAKIQEAVLAAYEVADEPAVNEESSADESIVEEN</sequence>
<feature type="chain" id="PRO_0000157200" description="Putative septation protein SpoVG 1">
    <location>
        <begin position="1"/>
        <end position="102"/>
    </location>
</feature>
<reference key="1">
    <citation type="journal article" date="2001" name="Science">
        <title>Comparative genomics of Listeria species.</title>
        <authorList>
            <person name="Glaser P."/>
            <person name="Frangeul L."/>
            <person name="Buchrieser C."/>
            <person name="Rusniok C."/>
            <person name="Amend A."/>
            <person name="Baquero F."/>
            <person name="Berche P."/>
            <person name="Bloecker H."/>
            <person name="Brandt P."/>
            <person name="Chakraborty T."/>
            <person name="Charbit A."/>
            <person name="Chetouani F."/>
            <person name="Couve E."/>
            <person name="de Daruvar A."/>
            <person name="Dehoux P."/>
            <person name="Domann E."/>
            <person name="Dominguez-Bernal G."/>
            <person name="Duchaud E."/>
            <person name="Durant L."/>
            <person name="Dussurget O."/>
            <person name="Entian K.-D."/>
            <person name="Fsihi H."/>
            <person name="Garcia-del Portillo F."/>
            <person name="Garrido P."/>
            <person name="Gautier L."/>
            <person name="Goebel W."/>
            <person name="Gomez-Lopez N."/>
            <person name="Hain T."/>
            <person name="Hauf J."/>
            <person name="Jackson D."/>
            <person name="Jones L.-M."/>
            <person name="Kaerst U."/>
            <person name="Kreft J."/>
            <person name="Kuhn M."/>
            <person name="Kunst F."/>
            <person name="Kurapkat G."/>
            <person name="Madueno E."/>
            <person name="Maitournam A."/>
            <person name="Mata Vicente J."/>
            <person name="Ng E."/>
            <person name="Nedjari H."/>
            <person name="Nordsiek G."/>
            <person name="Novella S."/>
            <person name="de Pablos B."/>
            <person name="Perez-Diaz J.-C."/>
            <person name="Purcell R."/>
            <person name="Remmel B."/>
            <person name="Rose M."/>
            <person name="Schlueter T."/>
            <person name="Simoes N."/>
            <person name="Tierrez A."/>
            <person name="Vazquez-Boland J.-A."/>
            <person name="Voss H."/>
            <person name="Wehland J."/>
            <person name="Cossart P."/>
        </authorList>
    </citation>
    <scope>NUCLEOTIDE SEQUENCE [LARGE SCALE GENOMIC DNA]</scope>
    <source>
        <strain>ATCC BAA-679 / EGD-e</strain>
    </source>
</reference>
<name>SP5G1_LISMO</name>
<proteinExistence type="inferred from homology"/>
<gene>
    <name evidence="1" type="primary">spoVG1</name>
    <name type="ordered locus">lmo0196</name>
</gene>
<comment type="function">
    <text evidence="1">Could be involved in septation.</text>
</comment>
<comment type="similarity">
    <text evidence="1">Belongs to the SpoVG family.</text>
</comment>
<protein>
    <recommendedName>
        <fullName evidence="1">Putative septation protein SpoVG 1</fullName>
    </recommendedName>
</protein>
<dbReference type="EMBL" id="AL591974">
    <property type="protein sequence ID" value="CAD00723.1"/>
    <property type="molecule type" value="Genomic_DNA"/>
</dbReference>
<dbReference type="PIR" id="AE1099">
    <property type="entry name" value="AE1099"/>
</dbReference>
<dbReference type="RefSeq" id="NP_463727.1">
    <property type="nucleotide sequence ID" value="NC_003210.1"/>
</dbReference>
<dbReference type="SMR" id="Q8YAD5"/>
<dbReference type="STRING" id="169963.gene:17592832"/>
<dbReference type="PaxDb" id="169963-lmo0196"/>
<dbReference type="EnsemblBacteria" id="CAD00723">
    <property type="protein sequence ID" value="CAD00723"/>
    <property type="gene ID" value="CAD00723"/>
</dbReference>
<dbReference type="GeneID" id="987023"/>
<dbReference type="KEGG" id="lmo:lmo0196"/>
<dbReference type="PATRIC" id="fig|169963.11.peg.201"/>
<dbReference type="eggNOG" id="COG2088">
    <property type="taxonomic scope" value="Bacteria"/>
</dbReference>
<dbReference type="HOGENOM" id="CLU_103669_2_1_9"/>
<dbReference type="OrthoDB" id="9796286at2"/>
<dbReference type="PhylomeDB" id="Q8YAD5"/>
<dbReference type="BioCyc" id="LMON169963:LMO0196-MONOMER"/>
<dbReference type="Proteomes" id="UP000000817">
    <property type="component" value="Chromosome"/>
</dbReference>
<dbReference type="GO" id="GO:0000917">
    <property type="term" value="P:division septum assembly"/>
    <property type="evidence" value="ECO:0007669"/>
    <property type="project" value="UniProtKB-KW"/>
</dbReference>
<dbReference type="GO" id="GO:0030435">
    <property type="term" value="P:sporulation resulting in formation of a cellular spore"/>
    <property type="evidence" value="ECO:0007669"/>
    <property type="project" value="InterPro"/>
</dbReference>
<dbReference type="FunFam" id="3.30.1120.40:FF:000001">
    <property type="entry name" value="Putative septation protein SpoVG"/>
    <property type="match status" value="1"/>
</dbReference>
<dbReference type="Gene3D" id="3.30.1120.40">
    <property type="entry name" value="Stage V sporulation protein G"/>
    <property type="match status" value="1"/>
</dbReference>
<dbReference type="HAMAP" id="MF_00819">
    <property type="entry name" value="SpoVG"/>
    <property type="match status" value="1"/>
</dbReference>
<dbReference type="InterPro" id="IPR007170">
    <property type="entry name" value="SpoVG"/>
</dbReference>
<dbReference type="InterPro" id="IPR036751">
    <property type="entry name" value="SpoVG_sf"/>
</dbReference>
<dbReference type="NCBIfam" id="NF009749">
    <property type="entry name" value="PRK13259.1"/>
    <property type="match status" value="1"/>
</dbReference>
<dbReference type="PANTHER" id="PTHR38429">
    <property type="entry name" value="SEPTATION PROTEIN SPOVG-RELATED"/>
    <property type="match status" value="1"/>
</dbReference>
<dbReference type="PANTHER" id="PTHR38429:SF1">
    <property type="entry name" value="SEPTATION PROTEIN SPOVG-RELATED"/>
    <property type="match status" value="1"/>
</dbReference>
<dbReference type="Pfam" id="PF04026">
    <property type="entry name" value="SpoVG"/>
    <property type="match status" value="1"/>
</dbReference>
<dbReference type="SUPFAM" id="SSF160537">
    <property type="entry name" value="SpoVG-like"/>
    <property type="match status" value="1"/>
</dbReference>
<keyword id="KW-0131">Cell cycle</keyword>
<keyword id="KW-0132">Cell division</keyword>
<keyword id="KW-1185">Reference proteome</keyword>
<keyword id="KW-0717">Septation</keyword>
<accession>Q8YAD5</accession>
<organism>
    <name type="scientific">Listeria monocytogenes serovar 1/2a (strain ATCC BAA-679 / EGD-e)</name>
    <dbReference type="NCBI Taxonomy" id="169963"/>
    <lineage>
        <taxon>Bacteria</taxon>
        <taxon>Bacillati</taxon>
        <taxon>Bacillota</taxon>
        <taxon>Bacilli</taxon>
        <taxon>Bacillales</taxon>
        <taxon>Listeriaceae</taxon>
        <taxon>Listeria</taxon>
    </lineage>
</organism>